<feature type="chain" id="PRO_1000087849" description="Proline--tRNA ligase">
    <location>
        <begin position="1"/>
        <end position="584"/>
    </location>
</feature>
<feature type="region of interest" description="Disordered" evidence="2">
    <location>
        <begin position="242"/>
        <end position="261"/>
    </location>
</feature>
<accession>A8LYE7</accession>
<gene>
    <name evidence="1" type="primary">proS</name>
    <name type="ordered locus">Sare_3553</name>
</gene>
<protein>
    <recommendedName>
        <fullName evidence="1">Proline--tRNA ligase</fullName>
        <ecNumber evidence="1">6.1.1.15</ecNumber>
    </recommendedName>
    <alternativeName>
        <fullName evidence="1">Prolyl-tRNA synthetase</fullName>
        <shortName evidence="1">ProRS</shortName>
    </alternativeName>
</protein>
<organism>
    <name type="scientific">Salinispora arenicola (strain CNS-205)</name>
    <dbReference type="NCBI Taxonomy" id="391037"/>
    <lineage>
        <taxon>Bacteria</taxon>
        <taxon>Bacillati</taxon>
        <taxon>Actinomycetota</taxon>
        <taxon>Actinomycetes</taxon>
        <taxon>Micromonosporales</taxon>
        <taxon>Micromonosporaceae</taxon>
        <taxon>Salinispora</taxon>
    </lineage>
</organism>
<keyword id="KW-0030">Aminoacyl-tRNA synthetase</keyword>
<keyword id="KW-0067">ATP-binding</keyword>
<keyword id="KW-0963">Cytoplasm</keyword>
<keyword id="KW-0436">Ligase</keyword>
<keyword id="KW-0547">Nucleotide-binding</keyword>
<keyword id="KW-0648">Protein biosynthesis</keyword>
<reference key="1">
    <citation type="submission" date="2007-10" db="EMBL/GenBank/DDBJ databases">
        <title>Complete sequence of Salinispora arenicola CNS-205.</title>
        <authorList>
            <consortium name="US DOE Joint Genome Institute"/>
            <person name="Copeland A."/>
            <person name="Lucas S."/>
            <person name="Lapidus A."/>
            <person name="Barry K."/>
            <person name="Glavina del Rio T."/>
            <person name="Dalin E."/>
            <person name="Tice H."/>
            <person name="Pitluck S."/>
            <person name="Foster B."/>
            <person name="Schmutz J."/>
            <person name="Larimer F."/>
            <person name="Land M."/>
            <person name="Hauser L."/>
            <person name="Kyrpides N."/>
            <person name="Ivanova N."/>
            <person name="Jensen P.R."/>
            <person name="Moore B.S."/>
            <person name="Penn K."/>
            <person name="Jenkins C."/>
            <person name="Udwary D."/>
            <person name="Xiang L."/>
            <person name="Gontang E."/>
            <person name="Richardson P."/>
        </authorList>
    </citation>
    <scope>NUCLEOTIDE SEQUENCE [LARGE SCALE GENOMIC DNA]</scope>
    <source>
        <strain>CNS-205</strain>
    </source>
</reference>
<evidence type="ECO:0000255" key="1">
    <source>
        <dbReference type="HAMAP-Rule" id="MF_01569"/>
    </source>
</evidence>
<evidence type="ECO:0000256" key="2">
    <source>
        <dbReference type="SAM" id="MobiDB-lite"/>
    </source>
</evidence>
<name>SYP_SALAI</name>
<dbReference type="EC" id="6.1.1.15" evidence="1"/>
<dbReference type="EMBL" id="CP000850">
    <property type="protein sequence ID" value="ABV99355.1"/>
    <property type="molecule type" value="Genomic_DNA"/>
</dbReference>
<dbReference type="SMR" id="A8LYE7"/>
<dbReference type="STRING" id="391037.Sare_3553"/>
<dbReference type="KEGG" id="saq:Sare_3553"/>
<dbReference type="PATRIC" id="fig|391037.6.peg.3580"/>
<dbReference type="eggNOG" id="COG0442">
    <property type="taxonomic scope" value="Bacteria"/>
</dbReference>
<dbReference type="HOGENOM" id="CLU_016739_0_0_11"/>
<dbReference type="OrthoDB" id="9809052at2"/>
<dbReference type="GO" id="GO:0005829">
    <property type="term" value="C:cytosol"/>
    <property type="evidence" value="ECO:0007669"/>
    <property type="project" value="TreeGrafter"/>
</dbReference>
<dbReference type="GO" id="GO:0002161">
    <property type="term" value="F:aminoacyl-tRNA deacylase activity"/>
    <property type="evidence" value="ECO:0007669"/>
    <property type="project" value="InterPro"/>
</dbReference>
<dbReference type="GO" id="GO:0005524">
    <property type="term" value="F:ATP binding"/>
    <property type="evidence" value="ECO:0007669"/>
    <property type="project" value="UniProtKB-UniRule"/>
</dbReference>
<dbReference type="GO" id="GO:0004827">
    <property type="term" value="F:proline-tRNA ligase activity"/>
    <property type="evidence" value="ECO:0007669"/>
    <property type="project" value="UniProtKB-UniRule"/>
</dbReference>
<dbReference type="GO" id="GO:0006433">
    <property type="term" value="P:prolyl-tRNA aminoacylation"/>
    <property type="evidence" value="ECO:0007669"/>
    <property type="project" value="UniProtKB-UniRule"/>
</dbReference>
<dbReference type="Gene3D" id="3.40.50.800">
    <property type="entry name" value="Anticodon-binding domain"/>
    <property type="match status" value="1"/>
</dbReference>
<dbReference type="Gene3D" id="3.30.930.10">
    <property type="entry name" value="Bira Bifunctional Protein, Domain 2"/>
    <property type="match status" value="2"/>
</dbReference>
<dbReference type="HAMAP" id="MF_01569">
    <property type="entry name" value="Pro_tRNA_synth_type1"/>
    <property type="match status" value="1"/>
</dbReference>
<dbReference type="InterPro" id="IPR002314">
    <property type="entry name" value="aa-tRNA-synt_IIb"/>
</dbReference>
<dbReference type="InterPro" id="IPR006195">
    <property type="entry name" value="aa-tRNA-synth_II"/>
</dbReference>
<dbReference type="InterPro" id="IPR045864">
    <property type="entry name" value="aa-tRNA-synth_II/BPL/LPL"/>
</dbReference>
<dbReference type="InterPro" id="IPR004154">
    <property type="entry name" value="Anticodon-bd"/>
</dbReference>
<dbReference type="InterPro" id="IPR036621">
    <property type="entry name" value="Anticodon-bd_dom_sf"/>
</dbReference>
<dbReference type="InterPro" id="IPR002316">
    <property type="entry name" value="Pro-tRNA-ligase_IIa"/>
</dbReference>
<dbReference type="InterPro" id="IPR004500">
    <property type="entry name" value="Pro-tRNA-synth_IIa_bac-type"/>
</dbReference>
<dbReference type="InterPro" id="IPR023717">
    <property type="entry name" value="Pro-tRNA-Synthase_IIa_type1"/>
</dbReference>
<dbReference type="InterPro" id="IPR050062">
    <property type="entry name" value="Pro-tRNA_synthetase"/>
</dbReference>
<dbReference type="InterPro" id="IPR036754">
    <property type="entry name" value="YbaK/aa-tRNA-synt-asso_dom_sf"/>
</dbReference>
<dbReference type="InterPro" id="IPR007214">
    <property type="entry name" value="YbaK/aa-tRNA-synth-assoc-dom"/>
</dbReference>
<dbReference type="NCBIfam" id="NF006625">
    <property type="entry name" value="PRK09194.1"/>
    <property type="match status" value="1"/>
</dbReference>
<dbReference type="NCBIfam" id="TIGR00409">
    <property type="entry name" value="proS_fam_II"/>
    <property type="match status" value="1"/>
</dbReference>
<dbReference type="PANTHER" id="PTHR42753">
    <property type="entry name" value="MITOCHONDRIAL RIBOSOME PROTEIN L39/PROLYL-TRNA LIGASE FAMILY MEMBER"/>
    <property type="match status" value="1"/>
</dbReference>
<dbReference type="PANTHER" id="PTHR42753:SF2">
    <property type="entry name" value="PROLINE--TRNA LIGASE"/>
    <property type="match status" value="1"/>
</dbReference>
<dbReference type="Pfam" id="PF03129">
    <property type="entry name" value="HGTP_anticodon"/>
    <property type="match status" value="1"/>
</dbReference>
<dbReference type="Pfam" id="PF00587">
    <property type="entry name" value="tRNA-synt_2b"/>
    <property type="match status" value="1"/>
</dbReference>
<dbReference type="Pfam" id="PF04073">
    <property type="entry name" value="tRNA_edit"/>
    <property type="match status" value="1"/>
</dbReference>
<dbReference type="PRINTS" id="PR01046">
    <property type="entry name" value="TRNASYNTHPRO"/>
</dbReference>
<dbReference type="SUPFAM" id="SSF52954">
    <property type="entry name" value="Class II aaRS ABD-related"/>
    <property type="match status" value="1"/>
</dbReference>
<dbReference type="SUPFAM" id="SSF55681">
    <property type="entry name" value="Class II aaRS and biotin synthetases"/>
    <property type="match status" value="1"/>
</dbReference>
<dbReference type="SUPFAM" id="SSF55826">
    <property type="entry name" value="YbaK/ProRS associated domain"/>
    <property type="match status" value="1"/>
</dbReference>
<dbReference type="PROSITE" id="PS50862">
    <property type="entry name" value="AA_TRNA_LIGASE_II"/>
    <property type="match status" value="1"/>
</dbReference>
<comment type="function">
    <text evidence="1">Catalyzes the attachment of proline to tRNA(Pro) in a two-step reaction: proline is first activated by ATP to form Pro-AMP and then transferred to the acceptor end of tRNA(Pro). As ProRS can inadvertently accommodate and process non-cognate amino acids such as alanine and cysteine, to avoid such errors it has two additional distinct editing activities against alanine. One activity is designated as 'pretransfer' editing and involves the tRNA(Pro)-independent hydrolysis of activated Ala-AMP. The other activity is designated 'posttransfer' editing and involves deacylation of mischarged Ala-tRNA(Pro). The misacylated Cys-tRNA(Pro) is not edited by ProRS.</text>
</comment>
<comment type="catalytic activity">
    <reaction evidence="1">
        <text>tRNA(Pro) + L-proline + ATP = L-prolyl-tRNA(Pro) + AMP + diphosphate</text>
        <dbReference type="Rhea" id="RHEA:14305"/>
        <dbReference type="Rhea" id="RHEA-COMP:9700"/>
        <dbReference type="Rhea" id="RHEA-COMP:9702"/>
        <dbReference type="ChEBI" id="CHEBI:30616"/>
        <dbReference type="ChEBI" id="CHEBI:33019"/>
        <dbReference type="ChEBI" id="CHEBI:60039"/>
        <dbReference type="ChEBI" id="CHEBI:78442"/>
        <dbReference type="ChEBI" id="CHEBI:78532"/>
        <dbReference type="ChEBI" id="CHEBI:456215"/>
        <dbReference type="EC" id="6.1.1.15"/>
    </reaction>
</comment>
<comment type="subunit">
    <text evidence="1">Homodimer.</text>
</comment>
<comment type="subcellular location">
    <subcellularLocation>
        <location evidence="1">Cytoplasm</location>
    </subcellularLocation>
</comment>
<comment type="domain">
    <text evidence="1">Consists of three domains: the N-terminal catalytic domain, the editing domain and the C-terminal anticodon-binding domain.</text>
</comment>
<comment type="similarity">
    <text evidence="1">Belongs to the class-II aminoacyl-tRNA synthetase family. ProS type 1 subfamily.</text>
</comment>
<proteinExistence type="inferred from homology"/>
<sequence length="584" mass="63181">MLLRMSTLLLRTLREDPADAEVPSHRLLLRAGYLRRAAPGGYTWLPLGKLVLDRVAEVIRTEMLAIGDQEVHFPALLPAEPYRTSGRWTEYGDDLITLVDRRGAEHLLAPTHEEPAALLVKELFTSYRDFPVGIFQIQTKFRDEARPRAGLLRGREFLMKDAYSFDLDEAGLQAAYDRHRSAYQKIFARLGLDYAVVHAVSGAMGGSASEEFLATSKIGEDVYVGCTACDHTANTEAVTTLAPPASNPEERPATQVHDTPDTPTIASLVGLANARALAGRDDWAAGDTLKNVVLTIRPPGAAKSELLVIGLPGDREVDLKRVAATLAPATVTVFDGWADHPELVRGYLGPQVMAKLGVRYLVDPRVVPGTAWLTGANEPGRHATNVVCGRDFLPDGTIEAAEVRPGDPCPACRTGQLTLRRGIEIGHIFQLGRRYTDAFTVDVLGPEGQSVRPTMGCYGIGVSRAVAVIAEQHHDERGLVWPTEVAPCDVHLVAAGRGPQVETALGLGNRLAEAGLRVLVDDRGHVSAGVKFTDAELVGIPRTVVVGRRLADGYAEVRDRPSGKRADVRVDALVEHLVNEVHSG</sequence>